<accession>A1JKK5</accession>
<name>RECO_YERE8</name>
<reference key="1">
    <citation type="journal article" date="2006" name="PLoS Genet.">
        <title>The complete genome sequence and comparative genome analysis of the high pathogenicity Yersinia enterocolitica strain 8081.</title>
        <authorList>
            <person name="Thomson N.R."/>
            <person name="Howard S."/>
            <person name="Wren B.W."/>
            <person name="Holden M.T.G."/>
            <person name="Crossman L."/>
            <person name="Challis G.L."/>
            <person name="Churcher C."/>
            <person name="Mungall K."/>
            <person name="Brooks K."/>
            <person name="Chillingworth T."/>
            <person name="Feltwell T."/>
            <person name="Abdellah Z."/>
            <person name="Hauser H."/>
            <person name="Jagels K."/>
            <person name="Maddison M."/>
            <person name="Moule S."/>
            <person name="Sanders M."/>
            <person name="Whitehead S."/>
            <person name="Quail M.A."/>
            <person name="Dougan G."/>
            <person name="Parkhill J."/>
            <person name="Prentice M.B."/>
        </authorList>
    </citation>
    <scope>NUCLEOTIDE SEQUENCE [LARGE SCALE GENOMIC DNA]</scope>
    <source>
        <strain>NCTC 13174 / 8081</strain>
    </source>
</reference>
<dbReference type="EMBL" id="AM286415">
    <property type="protein sequence ID" value="CAL11117.1"/>
    <property type="molecule type" value="Genomic_DNA"/>
</dbReference>
<dbReference type="RefSeq" id="WP_005172741.1">
    <property type="nucleotide sequence ID" value="NC_008800.1"/>
</dbReference>
<dbReference type="RefSeq" id="YP_001005352.1">
    <property type="nucleotide sequence ID" value="NC_008800.1"/>
</dbReference>
<dbReference type="SMR" id="A1JKK5"/>
<dbReference type="GeneID" id="93969918"/>
<dbReference type="KEGG" id="yen:YE1019"/>
<dbReference type="PATRIC" id="fig|393305.7.peg.1115"/>
<dbReference type="eggNOG" id="COG1381">
    <property type="taxonomic scope" value="Bacteria"/>
</dbReference>
<dbReference type="HOGENOM" id="CLU_066645_1_0_6"/>
<dbReference type="OrthoDB" id="9804792at2"/>
<dbReference type="Proteomes" id="UP000000642">
    <property type="component" value="Chromosome"/>
</dbReference>
<dbReference type="GO" id="GO:0043590">
    <property type="term" value="C:bacterial nucleoid"/>
    <property type="evidence" value="ECO:0007669"/>
    <property type="project" value="TreeGrafter"/>
</dbReference>
<dbReference type="GO" id="GO:0006310">
    <property type="term" value="P:DNA recombination"/>
    <property type="evidence" value="ECO:0007669"/>
    <property type="project" value="UniProtKB-UniRule"/>
</dbReference>
<dbReference type="GO" id="GO:0006302">
    <property type="term" value="P:double-strand break repair"/>
    <property type="evidence" value="ECO:0007669"/>
    <property type="project" value="TreeGrafter"/>
</dbReference>
<dbReference type="Gene3D" id="2.40.50.140">
    <property type="entry name" value="Nucleic acid-binding proteins"/>
    <property type="match status" value="1"/>
</dbReference>
<dbReference type="Gene3D" id="1.20.1440.120">
    <property type="entry name" value="Recombination protein O, C-terminal domain"/>
    <property type="match status" value="1"/>
</dbReference>
<dbReference type="HAMAP" id="MF_00201">
    <property type="entry name" value="RecO"/>
    <property type="match status" value="1"/>
</dbReference>
<dbReference type="InterPro" id="IPR037278">
    <property type="entry name" value="ARFGAP/RecO"/>
</dbReference>
<dbReference type="InterPro" id="IPR022572">
    <property type="entry name" value="DNA_rep/recomb_RecO_N"/>
</dbReference>
<dbReference type="InterPro" id="IPR012340">
    <property type="entry name" value="NA-bd_OB-fold"/>
</dbReference>
<dbReference type="InterPro" id="IPR003717">
    <property type="entry name" value="RecO"/>
</dbReference>
<dbReference type="InterPro" id="IPR042242">
    <property type="entry name" value="RecO_C"/>
</dbReference>
<dbReference type="NCBIfam" id="TIGR00613">
    <property type="entry name" value="reco"/>
    <property type="match status" value="1"/>
</dbReference>
<dbReference type="PANTHER" id="PTHR33991">
    <property type="entry name" value="DNA REPAIR PROTEIN RECO"/>
    <property type="match status" value="1"/>
</dbReference>
<dbReference type="PANTHER" id="PTHR33991:SF1">
    <property type="entry name" value="DNA REPAIR PROTEIN RECO"/>
    <property type="match status" value="1"/>
</dbReference>
<dbReference type="Pfam" id="PF02565">
    <property type="entry name" value="RecO_C"/>
    <property type="match status" value="1"/>
</dbReference>
<dbReference type="Pfam" id="PF11967">
    <property type="entry name" value="RecO_N"/>
    <property type="match status" value="1"/>
</dbReference>
<dbReference type="SUPFAM" id="SSF57863">
    <property type="entry name" value="ArfGap/RecO-like zinc finger"/>
    <property type="match status" value="1"/>
</dbReference>
<dbReference type="SUPFAM" id="SSF50249">
    <property type="entry name" value="Nucleic acid-binding proteins"/>
    <property type="match status" value="1"/>
</dbReference>
<sequence length="241" mass="27106">MEGWQRAFVLHGRPYSETSLMLDLFTEGEGRMRVLAKGARGRRSNLKGCLQPFTPLLVRWTGRGEVKTLRSAEPVSLALPLTGSMLYSGLYVNELLSRVLEHQTNYSALFFDYLHCLQSLAGSDGSPEYALRQFELAILAHLGYGVDFLHCAGSGQPVSDTMTYRYREEKGFIASLVVDHYSFTGRQLLALANREFPDADTLRAAKRFTRIALKPYLGGKPLKSRELFRQFVIKPPSEPLP</sequence>
<comment type="function">
    <text evidence="1">Involved in DNA repair and RecF pathway recombination.</text>
</comment>
<comment type="similarity">
    <text evidence="1">Belongs to the RecO family.</text>
</comment>
<protein>
    <recommendedName>
        <fullName evidence="1">DNA repair protein RecO</fullName>
    </recommendedName>
    <alternativeName>
        <fullName evidence="1">Recombination protein O</fullName>
    </alternativeName>
</protein>
<gene>
    <name evidence="1" type="primary">recO</name>
    <name type="ordered locus">YE1019</name>
</gene>
<keyword id="KW-0227">DNA damage</keyword>
<keyword id="KW-0233">DNA recombination</keyword>
<keyword id="KW-0234">DNA repair</keyword>
<organism>
    <name type="scientific">Yersinia enterocolitica serotype O:8 / biotype 1B (strain NCTC 13174 / 8081)</name>
    <dbReference type="NCBI Taxonomy" id="393305"/>
    <lineage>
        <taxon>Bacteria</taxon>
        <taxon>Pseudomonadati</taxon>
        <taxon>Pseudomonadota</taxon>
        <taxon>Gammaproteobacteria</taxon>
        <taxon>Enterobacterales</taxon>
        <taxon>Yersiniaceae</taxon>
        <taxon>Yersinia</taxon>
    </lineage>
</organism>
<feature type="chain" id="PRO_1000012165" description="DNA repair protein RecO">
    <location>
        <begin position="1"/>
        <end position="241"/>
    </location>
</feature>
<proteinExistence type="inferred from homology"/>
<evidence type="ECO:0000255" key="1">
    <source>
        <dbReference type="HAMAP-Rule" id="MF_00201"/>
    </source>
</evidence>